<organismHost>
    <name type="scientific">Ictaluridae</name>
    <name type="common">bullhead catfishes</name>
    <dbReference type="NCBI Taxonomy" id="7996"/>
</organismHost>
<name>VG01_ICHVA</name>
<reference key="1">
    <citation type="journal article" date="1992" name="Virology">
        <title>Channel catfish virus: a new type of herpesvirus.</title>
        <authorList>
            <person name="Davison A.J."/>
        </authorList>
    </citation>
    <scope>NUCLEOTIDE SEQUENCE [LARGE SCALE GENOMIC DNA]</scope>
</reference>
<protein>
    <recommendedName>
        <fullName>Uncharacterized protein ORF1</fullName>
    </recommendedName>
</protein>
<feature type="chain" id="PRO_0000222088" description="Uncharacterized protein ORF1">
    <location>
        <begin position="1"/>
        <end position="862"/>
    </location>
</feature>
<feature type="region of interest" description="Disordered" evidence="1">
    <location>
        <begin position="45"/>
        <end position="91"/>
    </location>
</feature>
<feature type="region of interest" description="Disordered" evidence="1">
    <location>
        <begin position="633"/>
        <end position="824"/>
    </location>
</feature>
<feature type="region of interest" description="Disordered" evidence="1">
    <location>
        <begin position="837"/>
        <end position="862"/>
    </location>
</feature>
<feature type="compositionally biased region" description="Acidic residues" evidence="1">
    <location>
        <begin position="57"/>
        <end position="69"/>
    </location>
</feature>
<feature type="compositionally biased region" description="Acidic residues" evidence="1">
    <location>
        <begin position="78"/>
        <end position="91"/>
    </location>
</feature>
<feature type="compositionally biased region" description="Basic and acidic residues" evidence="1">
    <location>
        <begin position="633"/>
        <end position="650"/>
    </location>
</feature>
<feature type="compositionally biased region" description="Basic and acidic residues" evidence="1">
    <location>
        <begin position="657"/>
        <end position="686"/>
    </location>
</feature>
<feature type="compositionally biased region" description="Basic and acidic residues" evidence="1">
    <location>
        <begin position="694"/>
        <end position="703"/>
    </location>
</feature>
<feature type="compositionally biased region" description="Basic residues" evidence="1">
    <location>
        <begin position="751"/>
        <end position="760"/>
    </location>
</feature>
<feature type="compositionally biased region" description="Basic and acidic residues" evidence="1">
    <location>
        <begin position="761"/>
        <end position="779"/>
    </location>
</feature>
<dbReference type="EMBL" id="M75136">
    <property type="protein sequence ID" value="AAA88182.1"/>
    <property type="molecule type" value="Genomic_DNA"/>
</dbReference>
<dbReference type="EMBL" id="M75136">
    <property type="protein sequence ID" value="AAA88104.1"/>
    <property type="molecule type" value="Genomic_DNA"/>
</dbReference>
<dbReference type="PIR" id="B36786">
    <property type="entry name" value="B36786"/>
</dbReference>
<dbReference type="KEGG" id="vg:1488398"/>
<dbReference type="KEGG" id="vg:1488410"/>
<dbReference type="Proteomes" id="UP000007643">
    <property type="component" value="Segment"/>
</dbReference>
<dbReference type="GO" id="GO:0061574">
    <property type="term" value="C:ASAP complex"/>
    <property type="evidence" value="ECO:0007669"/>
    <property type="project" value="TreeGrafter"/>
</dbReference>
<dbReference type="GO" id="GO:0003723">
    <property type="term" value="F:RNA binding"/>
    <property type="evidence" value="ECO:0007669"/>
    <property type="project" value="TreeGrafter"/>
</dbReference>
<dbReference type="GO" id="GO:0008380">
    <property type="term" value="P:RNA splicing"/>
    <property type="evidence" value="ECO:0007669"/>
    <property type="project" value="TreeGrafter"/>
</dbReference>
<dbReference type="InterPro" id="IPR052793">
    <property type="entry name" value="EJC-associated_protein"/>
</dbReference>
<dbReference type="PANTHER" id="PTHR46589">
    <property type="entry name" value="APOPTOTIC CHROMATIN CONDENSATION INDUCER IN THE NUCLEUS"/>
    <property type="match status" value="1"/>
</dbReference>
<dbReference type="PANTHER" id="PTHR46589:SF1">
    <property type="entry name" value="APOPTOTIC CHROMATIN CONDENSATION INDUCER IN THE NUCLEUS"/>
    <property type="match status" value="1"/>
</dbReference>
<keyword id="KW-1185">Reference proteome</keyword>
<organism>
    <name type="scientific">Ictalurid herpesvirus 1 (strain Auburn)</name>
    <name type="common">IcHV-1</name>
    <name type="synonym">Channel catfish herpesvirus</name>
    <dbReference type="NCBI Taxonomy" id="766178"/>
    <lineage>
        <taxon>Viruses</taxon>
        <taxon>Duplodnaviria</taxon>
        <taxon>Heunggongvirae</taxon>
        <taxon>Peploviricota</taxon>
        <taxon>Herviviricetes</taxon>
        <taxon>Herpesvirales</taxon>
        <taxon>Alloherpesviridae</taxon>
        <taxon>Ictavirus</taxon>
        <taxon>Ictavirus ictaluridallo1</taxon>
        <taxon>Ictalurid herpesvirus 1</taxon>
    </lineage>
</organism>
<accession>Q00132</accession>
<sequence>MDGLKEITAAVASLGGTTDLSTYMVNFDLGDMMDQSAGVVIDDVHPPVEGASVDSAMDVDAESEDEKDEEPGTGRDEPEVESEADEDPDEVEDAIPAAVPSTIPLSTTIRGFGADLGLGKNLTPADLAGNGLGKYAATLFSKTLPTLAAVVEQKGAIDPGSSVAKSIVTLLSSELGNALGIFSRLPTREQNKMAAVMILMKVLGRTALPPLTKTDEGVLSAINLVFSGAKRKVLVSTHSDITKFIIFNDDGTIPTLGVDTVAPLMKYYDPRLKLTTLVLIKNLGNNGTVEVKRRSKGKTLVMRERIPVECFLFRAFPVTESSDNIYATLDFVKRLLKGVSTQSSYVYVKNPKSIGDDFLNTKNTSLTLGDAPLTVKLSFRKPTNATSQSGFKRWLLICKWLARGGRIELGPKSTLRSGHEEESLEEEVNTGCIRSMASLTRLASRAWSPKNILKVNDRPVMTPSILNEIPDFVHRGNTLPIWLLFAASLRLDIVAVKEWLSTEGGDPRSIDVAKLTYHQYLFLRLLSDAGIAKKGLSKLLTATNNWLITEMSFIVMYKGSYGVNPTVLSTISDNNVPNLPIFSWIGEIPLWSTSGIVEKVKIVHTNSSLVSRMMLLSDVTEVAKVHAIKAKVRAEQKASKESAKGEDAAKKAPKRKREAEAGTETPKKKQKEEKSEKPKKTGKAEKSTGTAKVTKKEKTEKKTPQTKSTNKKNVKSVSAEAGTAVTPDEANGKKKSTQVKKKESAGQHTTEKKKRTAAKKKTVDRPSGHRPSSKKEYRSQEFVSSDDSSDEEVISKPRVTTTENMKSTKKATLASNMDDDGDDDGFMTCAGQFDIGGGSGFLTSTAGRNRKSNKQSKTLLLS</sequence>
<proteinExistence type="predicted"/>
<gene>
    <name type="primary">ORF1</name>
</gene>
<evidence type="ECO:0000256" key="1">
    <source>
        <dbReference type="SAM" id="MobiDB-lite"/>
    </source>
</evidence>